<feature type="chain" id="PRO_0000056944" description="8-oxo-dGTP diphosphatase">
    <location>
        <begin position="1"/>
        <end position="124"/>
    </location>
</feature>
<feature type="domain" description="Nudix hydrolase" evidence="2">
    <location>
        <begin position="1"/>
        <end position="118"/>
    </location>
</feature>
<feature type="short sequence motif" description="Nudix box" evidence="2">
    <location>
        <begin position="26"/>
        <end position="47"/>
    </location>
</feature>
<feature type="binding site" evidence="1">
    <location>
        <position position="25"/>
    </location>
    <ligand>
        <name>Mg(2+)</name>
        <dbReference type="ChEBI" id="CHEBI:18420"/>
    </ligand>
</feature>
<feature type="binding site" evidence="1">
    <location>
        <position position="45"/>
    </location>
    <ligand>
        <name>Mg(2+)</name>
        <dbReference type="ChEBI" id="CHEBI:18420"/>
    </ligand>
</feature>
<gene>
    <name type="primary">mutT</name>
    <name type="ordered locus">BU202</name>
</gene>
<sequence length="124" mass="15061">MELLSKKKVYITRGKYKKNIWEFPGGKVKKHENIVHALKRELLEEVGIIVLKINFFQYIEYIYPEKKIKLYFFLKKKWKGRPYSIEGYTYLWKRLCHLRALDFPLANHSVINALKKNNILIKFR</sequence>
<name>MUTT_BUCAI</name>
<dbReference type="EC" id="3.6.1.55" evidence="1"/>
<dbReference type="EMBL" id="BA000003">
    <property type="protein sequence ID" value="BAB12919.1"/>
    <property type="molecule type" value="Genomic_DNA"/>
</dbReference>
<dbReference type="RefSeq" id="NP_240033.1">
    <property type="nucleotide sequence ID" value="NC_002528.1"/>
</dbReference>
<dbReference type="RefSeq" id="WP_010896000.1">
    <property type="nucleotide sequence ID" value="NC_002528.1"/>
</dbReference>
<dbReference type="SMR" id="P57298"/>
<dbReference type="STRING" id="563178.BUAP5A_199"/>
<dbReference type="EnsemblBacteria" id="BAB12919">
    <property type="protein sequence ID" value="BAB12919"/>
    <property type="gene ID" value="BAB12919"/>
</dbReference>
<dbReference type="KEGG" id="buc:BU202"/>
<dbReference type="PATRIC" id="fig|107806.10.peg.213"/>
<dbReference type="eggNOG" id="COG0494">
    <property type="taxonomic scope" value="Bacteria"/>
</dbReference>
<dbReference type="HOGENOM" id="CLU_037162_19_2_6"/>
<dbReference type="Proteomes" id="UP000001806">
    <property type="component" value="Chromosome"/>
</dbReference>
<dbReference type="GO" id="GO:0035539">
    <property type="term" value="F:8-oxo-7,8-dihydrodeoxyguanosine triphosphate pyrophosphatase activity"/>
    <property type="evidence" value="ECO:0007669"/>
    <property type="project" value="UniProtKB-EC"/>
</dbReference>
<dbReference type="GO" id="GO:0008413">
    <property type="term" value="F:8-oxo-7,8-dihydroguanosine triphosphate pyrophosphatase activity"/>
    <property type="evidence" value="ECO:0007669"/>
    <property type="project" value="TreeGrafter"/>
</dbReference>
<dbReference type="GO" id="GO:0044715">
    <property type="term" value="F:8-oxo-dGDP phosphatase activity"/>
    <property type="evidence" value="ECO:0007669"/>
    <property type="project" value="TreeGrafter"/>
</dbReference>
<dbReference type="GO" id="GO:0044716">
    <property type="term" value="F:8-oxo-GDP phosphatase activity"/>
    <property type="evidence" value="ECO:0007669"/>
    <property type="project" value="TreeGrafter"/>
</dbReference>
<dbReference type="GO" id="GO:0046872">
    <property type="term" value="F:metal ion binding"/>
    <property type="evidence" value="ECO:0007669"/>
    <property type="project" value="UniProtKB-KW"/>
</dbReference>
<dbReference type="GO" id="GO:0006281">
    <property type="term" value="P:DNA repair"/>
    <property type="evidence" value="ECO:0007669"/>
    <property type="project" value="UniProtKB-KW"/>
</dbReference>
<dbReference type="GO" id="GO:0006260">
    <property type="term" value="P:DNA replication"/>
    <property type="evidence" value="ECO:0007669"/>
    <property type="project" value="UniProtKB-KW"/>
</dbReference>
<dbReference type="Gene3D" id="3.90.79.10">
    <property type="entry name" value="Nucleoside Triphosphate Pyrophosphohydrolase"/>
    <property type="match status" value="1"/>
</dbReference>
<dbReference type="InterPro" id="IPR047127">
    <property type="entry name" value="MutT-like"/>
</dbReference>
<dbReference type="InterPro" id="IPR015797">
    <property type="entry name" value="NUDIX_hydrolase-like_dom_sf"/>
</dbReference>
<dbReference type="InterPro" id="IPR020084">
    <property type="entry name" value="NUDIX_hydrolase_CS"/>
</dbReference>
<dbReference type="InterPro" id="IPR000086">
    <property type="entry name" value="NUDIX_hydrolase_dom"/>
</dbReference>
<dbReference type="PANTHER" id="PTHR47707">
    <property type="entry name" value="8-OXO-DGTP DIPHOSPHATASE"/>
    <property type="match status" value="1"/>
</dbReference>
<dbReference type="PANTHER" id="PTHR47707:SF1">
    <property type="entry name" value="NUDIX HYDROLASE FAMILY PROTEIN"/>
    <property type="match status" value="1"/>
</dbReference>
<dbReference type="Pfam" id="PF00293">
    <property type="entry name" value="NUDIX"/>
    <property type="match status" value="1"/>
</dbReference>
<dbReference type="SUPFAM" id="SSF55811">
    <property type="entry name" value="Nudix"/>
    <property type="match status" value="1"/>
</dbReference>
<dbReference type="PROSITE" id="PS51462">
    <property type="entry name" value="NUDIX"/>
    <property type="match status" value="1"/>
</dbReference>
<dbReference type="PROSITE" id="PS00893">
    <property type="entry name" value="NUDIX_BOX"/>
    <property type="match status" value="1"/>
</dbReference>
<comment type="function">
    <text evidence="1">Specifically hydrolyzes both 8-oxo-deoxyguanosine triphosphate (8-oxo-dGTP) and 8-oxo-guanosine triphosphate (8-oxo-GTP) to the related monophosphates, thereby cleaning up the nucleotide pools and preventing misincorporation of 8-oxoGua into DNA and RNA. It prevents replicational errors by removing an oxidatively damaged form of guanine (8-oxo-dGTP) from DNA and the nucleotide pool. 8-oxo-dGTP can be inserted opposite dA and dC residues of template DNA with almost equal efficiency thus leading to A.T to G.C transversions.</text>
</comment>
<comment type="catalytic activity">
    <reaction evidence="1">
        <text>8-oxo-dGTP + H2O = 8-oxo-dGMP + diphosphate + H(+)</text>
        <dbReference type="Rhea" id="RHEA:31575"/>
        <dbReference type="ChEBI" id="CHEBI:15377"/>
        <dbReference type="ChEBI" id="CHEBI:15378"/>
        <dbReference type="ChEBI" id="CHEBI:33019"/>
        <dbReference type="ChEBI" id="CHEBI:63224"/>
        <dbReference type="ChEBI" id="CHEBI:77896"/>
        <dbReference type="EC" id="3.6.1.55"/>
    </reaction>
</comment>
<comment type="catalytic activity">
    <reaction evidence="1">
        <text>8-oxo-GTP + H2O = 8-oxo-GMP + diphosphate + H(+)</text>
        <dbReference type="Rhea" id="RHEA:67616"/>
        <dbReference type="ChEBI" id="CHEBI:15377"/>
        <dbReference type="ChEBI" id="CHEBI:15378"/>
        <dbReference type="ChEBI" id="CHEBI:33019"/>
        <dbReference type="ChEBI" id="CHEBI:143553"/>
        <dbReference type="ChEBI" id="CHEBI:145694"/>
    </reaction>
</comment>
<comment type="cofactor">
    <cofactor evidence="1">
        <name>Mg(2+)</name>
        <dbReference type="ChEBI" id="CHEBI:18420"/>
    </cofactor>
</comment>
<comment type="similarity">
    <text evidence="3">Belongs to the Nudix hydrolase family.</text>
</comment>
<evidence type="ECO:0000250" key="1">
    <source>
        <dbReference type="UniProtKB" id="P08337"/>
    </source>
</evidence>
<evidence type="ECO:0000255" key="2">
    <source>
        <dbReference type="PROSITE-ProRule" id="PRU00794"/>
    </source>
</evidence>
<evidence type="ECO:0000305" key="3"/>
<keyword id="KW-0227">DNA damage</keyword>
<keyword id="KW-0234">DNA repair</keyword>
<keyword id="KW-0235">DNA replication</keyword>
<keyword id="KW-0378">Hydrolase</keyword>
<keyword id="KW-0460">Magnesium</keyword>
<keyword id="KW-0479">Metal-binding</keyword>
<keyword id="KW-0515">Mutator protein</keyword>
<keyword id="KW-1185">Reference proteome</keyword>
<proteinExistence type="inferred from homology"/>
<protein>
    <recommendedName>
        <fullName>8-oxo-dGTP diphosphatase</fullName>
        <shortName>8-oxo-dGTPase</shortName>
        <ecNumber evidence="1">3.6.1.55</ecNumber>
    </recommendedName>
    <alternativeName>
        <fullName>7,8-dihydro-8-oxoguanine-triphosphatase</fullName>
    </alternativeName>
    <alternativeName>
        <fullName>Mutator protein MutT</fullName>
    </alternativeName>
    <alternativeName>
        <fullName>dGTP pyrophosphohydrolase</fullName>
    </alternativeName>
</protein>
<accession>P57298</accession>
<organism>
    <name type="scientific">Buchnera aphidicola subsp. Acyrthosiphon pisum (strain APS)</name>
    <name type="common">Acyrthosiphon pisum symbiotic bacterium</name>
    <dbReference type="NCBI Taxonomy" id="107806"/>
    <lineage>
        <taxon>Bacteria</taxon>
        <taxon>Pseudomonadati</taxon>
        <taxon>Pseudomonadota</taxon>
        <taxon>Gammaproteobacteria</taxon>
        <taxon>Enterobacterales</taxon>
        <taxon>Erwiniaceae</taxon>
        <taxon>Buchnera</taxon>
    </lineage>
</organism>
<reference key="1">
    <citation type="journal article" date="2000" name="Nature">
        <title>Genome sequence of the endocellular bacterial symbiont of aphids Buchnera sp. APS.</title>
        <authorList>
            <person name="Shigenobu S."/>
            <person name="Watanabe H."/>
            <person name="Hattori M."/>
            <person name="Sakaki Y."/>
            <person name="Ishikawa H."/>
        </authorList>
    </citation>
    <scope>NUCLEOTIDE SEQUENCE [LARGE SCALE GENOMIC DNA]</scope>
    <source>
        <strain>APS</strain>
    </source>
</reference>